<name>MAB21_DROPS</name>
<protein>
    <recommendedName>
        <fullName>Protein mab-21</fullName>
    </recommendedName>
</protein>
<reference key="1">
    <citation type="journal article" date="2005" name="Genome Res.">
        <title>Comparative genome sequencing of Drosophila pseudoobscura: chromosomal, gene, and cis-element evolution.</title>
        <authorList>
            <person name="Richards S."/>
            <person name="Liu Y."/>
            <person name="Bettencourt B.R."/>
            <person name="Hradecky P."/>
            <person name="Letovsky S."/>
            <person name="Nielsen R."/>
            <person name="Thornton K."/>
            <person name="Hubisz M.J."/>
            <person name="Chen R."/>
            <person name="Meisel R.P."/>
            <person name="Couronne O."/>
            <person name="Hua S."/>
            <person name="Smith M.A."/>
            <person name="Zhang P."/>
            <person name="Liu J."/>
            <person name="Bussemaker H.J."/>
            <person name="van Batenburg M.F."/>
            <person name="Howells S.L."/>
            <person name="Scherer S.E."/>
            <person name="Sodergren E."/>
            <person name="Matthews B.B."/>
            <person name="Crosby M.A."/>
            <person name="Schroeder A.J."/>
            <person name="Ortiz-Barrientos D."/>
            <person name="Rives C.M."/>
            <person name="Metzker M.L."/>
            <person name="Muzny D.M."/>
            <person name="Scott G."/>
            <person name="Steffen D."/>
            <person name="Wheeler D.A."/>
            <person name="Worley K.C."/>
            <person name="Havlak P."/>
            <person name="Durbin K.J."/>
            <person name="Egan A."/>
            <person name="Gill R."/>
            <person name="Hume J."/>
            <person name="Morgan M.B."/>
            <person name="Miner G."/>
            <person name="Hamilton C."/>
            <person name="Huang Y."/>
            <person name="Waldron L."/>
            <person name="Verduzco D."/>
            <person name="Clerc-Blankenburg K.P."/>
            <person name="Dubchak I."/>
            <person name="Noor M.A.F."/>
            <person name="Anderson W."/>
            <person name="White K.P."/>
            <person name="Clark A.G."/>
            <person name="Schaeffer S.W."/>
            <person name="Gelbart W.M."/>
            <person name="Weinstock G.M."/>
            <person name="Gibbs R.A."/>
        </authorList>
    </citation>
    <scope>NUCLEOTIDE SEQUENCE [LARGE SCALE GENOMIC DNA]</scope>
    <source>
        <strain>MV2-25 / Tucson 14011-0121.94</strain>
    </source>
</reference>
<keyword id="KW-1185">Reference proteome</keyword>
<gene>
    <name type="primary">mab-21</name>
    <name type="ORF">GA18400</name>
</gene>
<dbReference type="EMBL" id="CH379064">
    <property type="protein sequence ID" value="EAL31903.1"/>
    <property type="molecule type" value="Genomic_DNA"/>
</dbReference>
<dbReference type="RefSeq" id="XP_001354848.1">
    <property type="nucleotide sequence ID" value="XM_001354812.2"/>
</dbReference>
<dbReference type="SMR" id="Q29H56"/>
<dbReference type="FunCoup" id="Q29H56">
    <property type="interactions" value="245"/>
</dbReference>
<dbReference type="STRING" id="46245.Q29H56"/>
<dbReference type="EnsemblMetazoa" id="FBtr0273749">
    <property type="protein sequence ID" value="FBpp0272187"/>
    <property type="gene ID" value="FBgn0078402"/>
</dbReference>
<dbReference type="GeneID" id="4814933"/>
<dbReference type="KEGG" id="dpo:4814933"/>
<dbReference type="CTD" id="44127"/>
<dbReference type="eggNOG" id="KOG3963">
    <property type="taxonomic scope" value="Eukaryota"/>
</dbReference>
<dbReference type="HOGENOM" id="CLU_045315_0_0_1"/>
<dbReference type="InParanoid" id="Q29H56"/>
<dbReference type="OMA" id="RESIYMK"/>
<dbReference type="PhylomeDB" id="Q29H56"/>
<dbReference type="Proteomes" id="UP000001819">
    <property type="component" value="Chromosome X"/>
</dbReference>
<dbReference type="Bgee" id="FBgn0078402">
    <property type="expression patterns" value="Expressed in insect adult head"/>
</dbReference>
<dbReference type="FunFam" id="1.10.1410.40:FF:000002">
    <property type="entry name" value="protein mab-21-like 1"/>
    <property type="match status" value="1"/>
</dbReference>
<dbReference type="FunFam" id="3.30.460.90:FF:000001">
    <property type="entry name" value="protein mab-21-like 2"/>
    <property type="match status" value="1"/>
</dbReference>
<dbReference type="Gene3D" id="1.10.1410.40">
    <property type="match status" value="1"/>
</dbReference>
<dbReference type="Gene3D" id="3.30.460.90">
    <property type="match status" value="1"/>
</dbReference>
<dbReference type="InterPro" id="IPR046903">
    <property type="entry name" value="Mab-21-like_nuc_Trfase"/>
</dbReference>
<dbReference type="InterPro" id="IPR046906">
    <property type="entry name" value="Mab-21_HhH/H2TH-like"/>
</dbReference>
<dbReference type="InterPro" id="IPR024810">
    <property type="entry name" value="MAB21L/cGLR"/>
</dbReference>
<dbReference type="PANTHER" id="PTHR10656">
    <property type="entry name" value="CELL FATE DETERMINING PROTEIN MAB21-RELATED"/>
    <property type="match status" value="1"/>
</dbReference>
<dbReference type="PANTHER" id="PTHR10656:SF70">
    <property type="entry name" value="PROTEIN MAB-21-RELATED"/>
    <property type="match status" value="1"/>
</dbReference>
<dbReference type="Pfam" id="PF03281">
    <property type="entry name" value="Mab-21"/>
    <property type="match status" value="1"/>
</dbReference>
<dbReference type="Pfam" id="PF20266">
    <property type="entry name" value="Mab-21_C"/>
    <property type="match status" value="1"/>
</dbReference>
<dbReference type="SMART" id="SM01265">
    <property type="entry name" value="Mab-21"/>
    <property type="match status" value="1"/>
</dbReference>
<sequence length="365" mass="41865">MLVPSDMIAAQSKMVYQMNKYCADRVQVRKAQIHKQIQEVCRIVQDVLKEVEVQEPRFISSLNDYNGRFEGLEVISPTEFEIIIYLNQMGVLNFVDDGTLPGCAVLKLSDGRKRSMSLWVEFITASGYLSARKIRSRFQTLVAQACDKCAYRDIVKMIADTTEVKLRIRERIIVQITPAFKCAGLWPRSASHWPLPGIPWPHPNIVAEVKTEGFDMLSKECIALQGKNSAMEGDAWVLSFTDAENRLLQGASRRRCLSILKTLRDRHLDLPGNPVTSYHLKTLLLYECEKHPREMEWEENCIADRINGIFLQLISCLQCRRCPHYFLPNMDLFKGKSPGALENAAKQVWRLTRIMLTNVRCLEEL</sequence>
<organism>
    <name type="scientific">Drosophila pseudoobscura pseudoobscura</name>
    <name type="common">Fruit fly</name>
    <dbReference type="NCBI Taxonomy" id="46245"/>
    <lineage>
        <taxon>Eukaryota</taxon>
        <taxon>Metazoa</taxon>
        <taxon>Ecdysozoa</taxon>
        <taxon>Arthropoda</taxon>
        <taxon>Hexapoda</taxon>
        <taxon>Insecta</taxon>
        <taxon>Pterygota</taxon>
        <taxon>Neoptera</taxon>
        <taxon>Endopterygota</taxon>
        <taxon>Diptera</taxon>
        <taxon>Brachycera</taxon>
        <taxon>Muscomorpha</taxon>
        <taxon>Ephydroidea</taxon>
        <taxon>Drosophilidae</taxon>
        <taxon>Drosophila</taxon>
        <taxon>Sophophora</taxon>
    </lineage>
</organism>
<accession>Q29H56</accession>
<comment type="similarity">
    <text evidence="1">Belongs to the mab-21 family.</text>
</comment>
<comment type="caution">
    <text evidence="1">It is uncertain whether Met-1 or Met-7 is the initiator.</text>
</comment>
<evidence type="ECO:0000305" key="1"/>
<proteinExistence type="inferred from homology"/>
<feature type="chain" id="PRO_0000312796" description="Protein mab-21">
    <location>
        <begin position="1"/>
        <end position="365"/>
    </location>
</feature>